<sequence length="40" mass="4254">MNIILMGLPGAGKGTQASEIVKKFPIPHISTGDMFIKAIK</sequence>
<proteinExistence type="inferred from homology"/>
<accession>P35141</accession>
<keyword id="KW-0067">ATP-binding</keyword>
<keyword id="KW-0963">Cytoplasm</keyword>
<keyword id="KW-0418">Kinase</keyword>
<keyword id="KW-0545">Nucleotide biosynthesis</keyword>
<keyword id="KW-0547">Nucleotide-binding</keyword>
<keyword id="KW-0808">Transferase</keyword>
<feature type="chain" id="PRO_0000158850" description="Adenylate kinase">
    <location>
        <begin position="1"/>
        <end position="40" status="greater than"/>
    </location>
</feature>
<feature type="region of interest" description="NMP" evidence="1">
    <location>
        <begin position="30"/>
        <end position="40" status="greater than"/>
    </location>
</feature>
<feature type="binding site" evidence="1">
    <location>
        <begin position="10"/>
        <end position="15"/>
    </location>
    <ligand>
        <name>ATP</name>
        <dbReference type="ChEBI" id="CHEBI:30616"/>
    </ligand>
</feature>
<feature type="binding site" evidence="1">
    <location>
        <position position="31"/>
    </location>
    <ligand>
        <name>AMP</name>
        <dbReference type="ChEBI" id="CHEBI:456215"/>
    </ligand>
</feature>
<feature type="non-terminal residue">
    <location>
        <position position="40"/>
    </location>
</feature>
<reference key="1">
    <citation type="journal article" date="1992" name="Mol. Gen. Genet.">
        <title>Cloning and molecular characterization of the secY genes from Bacillus licheniformis and Staphylococcus carnosus: comparative analysis of nine members of the SecY family.</title>
        <authorList>
            <person name="Tschauder S."/>
            <person name="Driessen A.J.M."/>
            <person name="Freudl R."/>
        </authorList>
    </citation>
    <scope>NUCLEOTIDE SEQUENCE [GENOMIC DNA]</scope>
</reference>
<organism>
    <name type="scientific">Staphylococcus carnosus</name>
    <dbReference type="NCBI Taxonomy" id="1281"/>
    <lineage>
        <taxon>Bacteria</taxon>
        <taxon>Bacillati</taxon>
        <taxon>Bacillota</taxon>
        <taxon>Bacilli</taxon>
        <taxon>Bacillales</taxon>
        <taxon>Staphylococcaceae</taxon>
        <taxon>Staphylococcus</taxon>
    </lineage>
</organism>
<dbReference type="EC" id="2.7.4.3"/>
<dbReference type="EMBL" id="X70086">
    <property type="status" value="NOT_ANNOTATED_CDS"/>
    <property type="molecule type" value="Genomic_DNA"/>
</dbReference>
<dbReference type="PIR" id="S34407">
    <property type="entry name" value="S34407"/>
</dbReference>
<dbReference type="SMR" id="P35141"/>
<dbReference type="UniPathway" id="UPA00588">
    <property type="reaction ID" value="UER00649"/>
</dbReference>
<dbReference type="GO" id="GO:0005737">
    <property type="term" value="C:cytoplasm"/>
    <property type="evidence" value="ECO:0007669"/>
    <property type="project" value="UniProtKB-SubCell"/>
</dbReference>
<dbReference type="GO" id="GO:0004017">
    <property type="term" value="F:adenylate kinase activity"/>
    <property type="evidence" value="ECO:0007669"/>
    <property type="project" value="UniProtKB-EC"/>
</dbReference>
<dbReference type="GO" id="GO:0005524">
    <property type="term" value="F:ATP binding"/>
    <property type="evidence" value="ECO:0007669"/>
    <property type="project" value="UniProtKB-KW"/>
</dbReference>
<dbReference type="GO" id="GO:0044209">
    <property type="term" value="P:AMP salvage"/>
    <property type="evidence" value="ECO:0007669"/>
    <property type="project" value="UniProtKB-UniPathway"/>
</dbReference>
<dbReference type="Gene3D" id="3.40.50.300">
    <property type="entry name" value="P-loop containing nucleotide triphosphate hydrolases"/>
    <property type="match status" value="1"/>
</dbReference>
<dbReference type="InterPro" id="IPR000850">
    <property type="entry name" value="Adenylat/UMP-CMP_kin"/>
</dbReference>
<dbReference type="InterPro" id="IPR027417">
    <property type="entry name" value="P-loop_NTPase"/>
</dbReference>
<dbReference type="Pfam" id="PF00406">
    <property type="entry name" value="ADK"/>
    <property type="match status" value="1"/>
</dbReference>
<dbReference type="PRINTS" id="PR00094">
    <property type="entry name" value="ADENYLTKNASE"/>
</dbReference>
<dbReference type="SUPFAM" id="SSF52540">
    <property type="entry name" value="P-loop containing nucleoside triphosphate hydrolases"/>
    <property type="match status" value="1"/>
</dbReference>
<gene>
    <name type="primary">adk</name>
</gene>
<protein>
    <recommendedName>
        <fullName>Adenylate kinase</fullName>
        <shortName>AK</shortName>
        <ecNumber>2.7.4.3</ecNumber>
    </recommendedName>
    <alternativeName>
        <fullName>ATP-AMP transphosphorylase</fullName>
    </alternativeName>
    <alternativeName>
        <fullName>ATP:AMP phosphotransferase</fullName>
    </alternativeName>
    <alternativeName>
        <fullName>Adenylate monophosphate kinase</fullName>
    </alternativeName>
</protein>
<comment type="function">
    <text evidence="1">Catalyzes the reversible transfer of the terminal phosphate group between ATP and AMP. Plays an important role in cellular energy homeostasis and in adenine nucleotide metabolism.</text>
</comment>
<comment type="catalytic activity">
    <reaction evidence="1">
        <text>AMP + ATP = 2 ADP</text>
        <dbReference type="Rhea" id="RHEA:12973"/>
        <dbReference type="ChEBI" id="CHEBI:30616"/>
        <dbReference type="ChEBI" id="CHEBI:456215"/>
        <dbReference type="ChEBI" id="CHEBI:456216"/>
        <dbReference type="EC" id="2.7.4.3"/>
    </reaction>
</comment>
<comment type="pathway">
    <text evidence="1">Purine metabolism; AMP biosynthesis via salvage pathway; AMP from ADP: step 1/1.</text>
</comment>
<comment type="subunit">
    <text evidence="1">Monomer.</text>
</comment>
<comment type="subcellular location">
    <subcellularLocation>
        <location evidence="1">Cytoplasm</location>
    </subcellularLocation>
</comment>
<comment type="domain">
    <text evidence="1">Consists of three domains, a large central CORE domain and two small peripheral domains, NMPbind and LID, which undergo movements during catalysis. The LID domain closes over the site of phosphoryl transfer upon ATP binding. Assembling and dissambling the active center during each catalytic cycle provides an effective means to prevent ATP hydrolysis.</text>
</comment>
<comment type="similarity">
    <text evidence="2">Belongs to the adenylate kinase family.</text>
</comment>
<evidence type="ECO:0000250" key="1">
    <source>
        <dbReference type="UniProtKB" id="P69441"/>
    </source>
</evidence>
<evidence type="ECO:0000305" key="2"/>
<name>KAD_STACA</name>